<proteinExistence type="evidence at protein level"/>
<evidence type="ECO:0000250" key="1"/>
<evidence type="ECO:0000250" key="2">
    <source>
        <dbReference type="UniProtKB" id="P36507"/>
    </source>
</evidence>
<evidence type="ECO:0000250" key="3">
    <source>
        <dbReference type="UniProtKB" id="Q02750"/>
    </source>
</evidence>
<evidence type="ECO:0000255" key="4">
    <source>
        <dbReference type="PROSITE-ProRule" id="PRU00159"/>
    </source>
</evidence>
<evidence type="ECO:0000255" key="5">
    <source>
        <dbReference type="PROSITE-ProRule" id="PRU10027"/>
    </source>
</evidence>
<evidence type="ECO:0000256" key="6">
    <source>
        <dbReference type="SAM" id="MobiDB-lite"/>
    </source>
</evidence>
<evidence type="ECO:0000269" key="7">
    <source>
    </source>
</evidence>
<evidence type="ECO:0000269" key="8">
    <source>
    </source>
</evidence>
<evidence type="ECO:0000269" key="9">
    <source>
    </source>
</evidence>
<evidence type="ECO:0000269" key="10">
    <source>
    </source>
</evidence>
<evidence type="ECO:0000305" key="11"/>
<comment type="function">
    <text evidence="2 9">Catalyzes the concomitant phosphorylation of a threonine and a tyrosine residue in a Thr-Glu-Tyr sequence located in MAP kinases. Activates the ERK1 and ERK2 MAP kinases (PubMed:19219045). Activates BRAF in a KSR1 or KSR2-dependent manner; by binding to KSR1 or KSR2 releases the inhibitory intramolecular interaction between KSR1 or KSR2 protein kinase and N-terminal domains which promotes KSR1 or KSR2-BRAF dimerization and BRAF activation (By similarity).</text>
</comment>
<comment type="catalytic activity">
    <reaction evidence="7">
        <text>L-seryl-[protein] + ATP = O-phospho-L-seryl-[protein] + ADP + H(+)</text>
        <dbReference type="Rhea" id="RHEA:17989"/>
        <dbReference type="Rhea" id="RHEA-COMP:9863"/>
        <dbReference type="Rhea" id="RHEA-COMP:11604"/>
        <dbReference type="ChEBI" id="CHEBI:15378"/>
        <dbReference type="ChEBI" id="CHEBI:29999"/>
        <dbReference type="ChEBI" id="CHEBI:30616"/>
        <dbReference type="ChEBI" id="CHEBI:83421"/>
        <dbReference type="ChEBI" id="CHEBI:456216"/>
        <dbReference type="EC" id="2.7.12.2"/>
    </reaction>
</comment>
<comment type="catalytic activity">
    <reaction evidence="7">
        <text>L-threonyl-[protein] + ATP = O-phospho-L-threonyl-[protein] + ADP + H(+)</text>
        <dbReference type="Rhea" id="RHEA:46608"/>
        <dbReference type="Rhea" id="RHEA-COMP:11060"/>
        <dbReference type="Rhea" id="RHEA-COMP:11605"/>
        <dbReference type="ChEBI" id="CHEBI:15378"/>
        <dbReference type="ChEBI" id="CHEBI:30013"/>
        <dbReference type="ChEBI" id="CHEBI:30616"/>
        <dbReference type="ChEBI" id="CHEBI:61977"/>
        <dbReference type="ChEBI" id="CHEBI:456216"/>
        <dbReference type="EC" id="2.7.12.2"/>
    </reaction>
</comment>
<comment type="catalytic activity">
    <reaction evidence="7">
        <text>L-tyrosyl-[protein] + ATP = O-phospho-L-tyrosyl-[protein] + ADP + H(+)</text>
        <dbReference type="Rhea" id="RHEA:10596"/>
        <dbReference type="Rhea" id="RHEA-COMP:10136"/>
        <dbReference type="Rhea" id="RHEA-COMP:20101"/>
        <dbReference type="ChEBI" id="CHEBI:15378"/>
        <dbReference type="ChEBI" id="CHEBI:30616"/>
        <dbReference type="ChEBI" id="CHEBI:46858"/>
        <dbReference type="ChEBI" id="CHEBI:61978"/>
        <dbReference type="ChEBI" id="CHEBI:456216"/>
        <dbReference type="EC" id="2.7.12.2"/>
    </reaction>
</comment>
<comment type="cofactor">
    <cofactor evidence="7">
        <name>Mg(2+)</name>
        <dbReference type="ChEBI" id="CHEBI:18420"/>
    </cofactor>
</comment>
<comment type="activity regulation">
    <text>Inhibited by serine/threonine phosphatase 2A.</text>
</comment>
<comment type="subunit">
    <text evidence="2 3 7 8">Interacts with MORG1 (PubMed:15118098). Interacts with SGK1 (By similarity). Interacts with KSR1 (PubMed:10409742). Interacts with KSR1 and BRAF; the interaction with KSR1 mediates KSR1-BRAF dimerization (By similarity). Interacts with GLS (By similarity).</text>
</comment>
<comment type="interaction">
    <interactant intactId="EBI-397724">
        <id>Q63932</id>
    </interactant>
    <interactant intactId="EBI-7340552">
        <id>Q8CGE9</id>
        <label>Rgs12</label>
    </interactant>
    <organismsDiffer>false</organismsDiffer>
    <experiments>3</experiments>
</comment>
<comment type="interaction">
    <interactant intactId="EBI-397724">
        <id>Q63932</id>
    </interactant>
    <interactant intactId="EBI-9523517">
        <id>P85298-4</id>
        <label>ARHGAP8</label>
    </interactant>
    <organismsDiffer>true</organismsDiffer>
    <experiments>5</experiments>
</comment>
<comment type="interaction">
    <interactant intactId="EBI-397724">
        <id>Q63932</id>
    </interactant>
    <interactant intactId="EBI-714158">
        <id>Q13526</id>
        <label>PIN1</label>
    </interactant>
    <organismsDiffer>true</organismsDiffer>
    <experiments>12</experiments>
</comment>
<comment type="subcellular location">
    <subcellularLocation>
        <location evidence="7">Cytoplasm</location>
    </subcellularLocation>
    <subcellularLocation>
        <location evidence="7">Membrane</location>
        <topology evidence="7">Peripheral membrane protein</topology>
    </subcellularLocation>
    <text evidence="7">Membrane localization is probably regulated by its interaction with KSR1.</text>
</comment>
<comment type="tissue specificity">
    <text>Expressed in adult intestine, kidney, liver, lung, pancreas, spleen, thymus, and at high levels in the neonatal brain. Lower expression is found in adult brain and heart.</text>
</comment>
<comment type="PTM">
    <text evidence="9">Phosphorylation on Ser/Thr by MAP kinase kinase kinases (RAF or MEKK1) positively regulates the kinase activity. Phosphorylated by MAP2K1/MEK1. Low levels of autophosphorylation have been observed.</text>
</comment>
<comment type="similarity">
    <text evidence="11">Belongs to the protein kinase superfamily. STE Ser/Thr protein kinase family. MAP kinase kinase subfamily.</text>
</comment>
<gene>
    <name type="primary">Map2k2</name>
    <name type="synonym">Mek2</name>
    <name type="synonym">Mkk2</name>
    <name type="synonym">Prkmk2</name>
</gene>
<organism>
    <name type="scientific">Mus musculus</name>
    <name type="common">Mouse</name>
    <dbReference type="NCBI Taxonomy" id="10090"/>
    <lineage>
        <taxon>Eukaryota</taxon>
        <taxon>Metazoa</taxon>
        <taxon>Chordata</taxon>
        <taxon>Craniata</taxon>
        <taxon>Vertebrata</taxon>
        <taxon>Euteleostomi</taxon>
        <taxon>Mammalia</taxon>
        <taxon>Eutheria</taxon>
        <taxon>Euarchontoglires</taxon>
        <taxon>Glires</taxon>
        <taxon>Rodentia</taxon>
        <taxon>Myomorpha</taxon>
        <taxon>Muroidea</taxon>
        <taxon>Muridae</taxon>
        <taxon>Murinae</taxon>
        <taxon>Mus</taxon>
        <taxon>Mus</taxon>
    </lineage>
</organism>
<name>MP2K2_MOUSE</name>
<keyword id="KW-0002">3D-structure</keyword>
<keyword id="KW-0007">Acetylation</keyword>
<keyword id="KW-0067">ATP-binding</keyword>
<keyword id="KW-0963">Cytoplasm</keyword>
<keyword id="KW-0903">Direct protein sequencing</keyword>
<keyword id="KW-0418">Kinase</keyword>
<keyword id="KW-0460">Magnesium</keyword>
<keyword id="KW-0472">Membrane</keyword>
<keyword id="KW-0479">Metal-binding</keyword>
<keyword id="KW-0547">Nucleotide-binding</keyword>
<keyword id="KW-0597">Phosphoprotein</keyword>
<keyword id="KW-1185">Reference proteome</keyword>
<keyword id="KW-0723">Serine/threonine-protein kinase</keyword>
<keyword id="KW-0808">Transferase</keyword>
<keyword id="KW-0829">Tyrosine-protein kinase</keyword>
<protein>
    <recommendedName>
        <fullName>Dual specificity mitogen-activated protein kinase kinase 2</fullName>
        <shortName>MAP kinase kinase 2</shortName>
        <shortName>MAPKK 2</shortName>
        <ecNumber evidence="7">2.7.12.2</ecNumber>
    </recommendedName>
    <alternativeName>
        <fullName>ERK activator kinase 2</fullName>
    </alternativeName>
    <alternativeName>
        <fullName>MAPK/ERK kinase 2</fullName>
        <shortName>MEK 2</shortName>
    </alternativeName>
</protein>
<feature type="chain" id="PRO_0000086373" description="Dual specificity mitogen-activated protein kinase kinase 2">
    <location>
        <begin position="1"/>
        <end position="401"/>
    </location>
</feature>
<feature type="domain" description="Protein kinase" evidence="4">
    <location>
        <begin position="72"/>
        <end position="370"/>
    </location>
</feature>
<feature type="region of interest" description="Disordered" evidence="6">
    <location>
        <begin position="282"/>
        <end position="310"/>
    </location>
</feature>
<feature type="active site" description="Proton acceptor" evidence="4 5">
    <location>
        <position position="194"/>
    </location>
</feature>
<feature type="binding site" evidence="4">
    <location>
        <begin position="78"/>
        <end position="86"/>
    </location>
    <ligand>
        <name>ATP</name>
        <dbReference type="ChEBI" id="CHEBI:30616"/>
    </ligand>
</feature>
<feature type="binding site">
    <location>
        <position position="101"/>
    </location>
    <ligand>
        <name>ATP</name>
        <dbReference type="ChEBI" id="CHEBI:30616"/>
    </ligand>
</feature>
<feature type="site" description="Cleavage; by anthrax lethal factor" evidence="1">
    <location>
        <begin position="10"/>
        <end position="11"/>
    </location>
</feature>
<feature type="modified residue" description="N-acetylmethionine" evidence="2">
    <location>
        <position position="1"/>
    </location>
</feature>
<feature type="modified residue" description="Phosphoserine" evidence="2">
    <location>
        <position position="23"/>
    </location>
</feature>
<feature type="modified residue" description="Phosphoserine; by RAF" evidence="7">
    <location>
        <position position="222"/>
    </location>
</feature>
<feature type="modified residue" description="Phosphoserine; by RAF" evidence="2">
    <location>
        <position position="226"/>
    </location>
</feature>
<feature type="modified residue" description="Phosphoserine" evidence="2">
    <location>
        <position position="293"/>
    </location>
</feature>
<feature type="modified residue" description="Phosphoserine" evidence="2">
    <location>
        <position position="295"/>
    </location>
</feature>
<feature type="modified residue" description="Phosphoserine" evidence="3">
    <location>
        <position position="306"/>
    </location>
</feature>
<feature type="modified residue" description="Phosphothreonine" evidence="2">
    <location>
        <position position="395"/>
    </location>
</feature>
<feature type="modified residue" description="Phosphothreonine" evidence="2">
    <location>
        <position position="397"/>
    </location>
</feature>
<feature type="mutagenesis site" description="Inactivation." evidence="10">
    <original>K</original>
    <variation>M</variation>
    <location>
        <position position="101"/>
    </location>
</feature>
<feature type="sequence conflict" description="In Ref. 1; AAC60678." evidence="11" ref="1">
    <original>L</original>
    <variation>F</variation>
    <location>
        <position position="96"/>
    </location>
</feature>
<dbReference type="EC" id="2.7.12.2" evidence="7"/>
<dbReference type="EMBL" id="S68267">
    <property type="protein sequence ID" value="AAC60678.1"/>
    <property type="molecule type" value="mRNA"/>
</dbReference>
<dbReference type="EMBL" id="AK009392">
    <property type="protein sequence ID" value="BAB26261.1"/>
    <property type="molecule type" value="mRNA"/>
</dbReference>
<dbReference type="EMBL" id="AK080574">
    <property type="protein sequence ID" value="BAC37945.1"/>
    <property type="molecule type" value="mRNA"/>
</dbReference>
<dbReference type="EMBL" id="CH466553">
    <property type="protein sequence ID" value="EDL31456.1"/>
    <property type="molecule type" value="Genomic_DNA"/>
</dbReference>
<dbReference type="CCDS" id="CCDS24044.1"/>
<dbReference type="RefSeq" id="NP_075627.2">
    <property type="nucleotide sequence ID" value="NM_023138.5"/>
</dbReference>
<dbReference type="PDB" id="1JKY">
    <property type="method" value="X-ray"/>
    <property type="resolution" value="3.90 A"/>
    <property type="chains" value="B=1-16"/>
</dbReference>
<dbReference type="PDBsum" id="1JKY"/>
<dbReference type="SMR" id="Q63932"/>
<dbReference type="BioGRID" id="204950">
    <property type="interactions" value="15"/>
</dbReference>
<dbReference type="CORUM" id="Q63932"/>
<dbReference type="DIP" id="DIP-454N"/>
<dbReference type="FunCoup" id="Q63932">
    <property type="interactions" value="4167"/>
</dbReference>
<dbReference type="IntAct" id="Q63932">
    <property type="interactions" value="6"/>
</dbReference>
<dbReference type="MINT" id="Q63932"/>
<dbReference type="STRING" id="10090.ENSMUSP00000121111"/>
<dbReference type="ChEMBL" id="CHEMBL3885565"/>
<dbReference type="GlyGen" id="Q63932">
    <property type="glycosylation" value="1 site"/>
</dbReference>
<dbReference type="iPTMnet" id="Q63932"/>
<dbReference type="PhosphoSitePlus" id="Q63932"/>
<dbReference type="SwissPalm" id="Q63932"/>
<dbReference type="jPOST" id="Q63932"/>
<dbReference type="PaxDb" id="10090-ENSMUSP00000121111"/>
<dbReference type="PeptideAtlas" id="Q63932"/>
<dbReference type="ProteomicsDB" id="291394"/>
<dbReference type="Pumba" id="Q63932"/>
<dbReference type="DNASU" id="26396"/>
<dbReference type="Ensembl" id="ENSMUST00000143517.8">
    <property type="protein sequence ID" value="ENSMUSP00000121111.2"/>
    <property type="gene ID" value="ENSMUSG00000035027.19"/>
</dbReference>
<dbReference type="GeneID" id="26396"/>
<dbReference type="KEGG" id="mmu:26396"/>
<dbReference type="UCSC" id="uc007gfx.2">
    <property type="organism name" value="mouse"/>
</dbReference>
<dbReference type="AGR" id="MGI:1346867"/>
<dbReference type="CTD" id="5605"/>
<dbReference type="MGI" id="MGI:1346867">
    <property type="gene designation" value="Map2k2"/>
</dbReference>
<dbReference type="VEuPathDB" id="HostDB:ENSMUSG00000035027"/>
<dbReference type="eggNOG" id="KOG0581">
    <property type="taxonomic scope" value="Eukaryota"/>
</dbReference>
<dbReference type="GeneTree" id="ENSGT00940000153487"/>
<dbReference type="InParanoid" id="Q63932"/>
<dbReference type="OMA" id="QMTLTEP"/>
<dbReference type="OrthoDB" id="10252354at2759"/>
<dbReference type="PhylomeDB" id="Q63932"/>
<dbReference type="TreeFam" id="TF105137"/>
<dbReference type="BRENDA" id="2.7.12.2">
    <property type="organism ID" value="3474"/>
</dbReference>
<dbReference type="Reactome" id="R-MMU-112411">
    <property type="pathway name" value="MAPK1 (ERK2) activation"/>
</dbReference>
<dbReference type="Reactome" id="R-MMU-170968">
    <property type="pathway name" value="Frs2-mediated activation"/>
</dbReference>
<dbReference type="Reactome" id="R-MMU-445144">
    <property type="pathway name" value="Signal transduction by L1"/>
</dbReference>
<dbReference type="Reactome" id="R-MMU-5673000">
    <property type="pathway name" value="RAF activation"/>
</dbReference>
<dbReference type="Reactome" id="R-MMU-5674135">
    <property type="pathway name" value="MAP2K and MAPK activation"/>
</dbReference>
<dbReference type="Reactome" id="R-MMU-5674499">
    <property type="pathway name" value="Negative feedback regulation of MAPK pathway"/>
</dbReference>
<dbReference type="BioGRID-ORCS" id="26396">
    <property type="hits" value="3 hits in 83 CRISPR screens"/>
</dbReference>
<dbReference type="CD-CODE" id="01CA17F3">
    <property type="entry name" value="Centrosome"/>
</dbReference>
<dbReference type="ChiTaRS" id="Map2k2">
    <property type="organism name" value="mouse"/>
</dbReference>
<dbReference type="PRO" id="PR:Q63932"/>
<dbReference type="Proteomes" id="UP000000589">
    <property type="component" value="Chromosome 10"/>
</dbReference>
<dbReference type="RNAct" id="Q63932">
    <property type="molecule type" value="protein"/>
</dbReference>
<dbReference type="Bgee" id="ENSMUSG00000035027">
    <property type="expression patterns" value="Expressed in hindlimb stylopod muscle and 270 other cell types or tissues"/>
</dbReference>
<dbReference type="ExpressionAtlas" id="Q63932">
    <property type="expression patterns" value="baseline and differential"/>
</dbReference>
<dbReference type="GO" id="GO:0005911">
    <property type="term" value="C:cell-cell junction"/>
    <property type="evidence" value="ECO:0007669"/>
    <property type="project" value="Ensembl"/>
</dbReference>
<dbReference type="GO" id="GO:0005737">
    <property type="term" value="C:cytoplasm"/>
    <property type="evidence" value="ECO:0000314"/>
    <property type="project" value="MGI"/>
</dbReference>
<dbReference type="GO" id="GO:0009898">
    <property type="term" value="C:cytoplasmic side of plasma membrane"/>
    <property type="evidence" value="ECO:0007669"/>
    <property type="project" value="Ensembl"/>
</dbReference>
<dbReference type="GO" id="GO:0005829">
    <property type="term" value="C:cytosol"/>
    <property type="evidence" value="ECO:0000304"/>
    <property type="project" value="UniProtKB"/>
</dbReference>
<dbReference type="GO" id="GO:0005769">
    <property type="term" value="C:early endosome"/>
    <property type="evidence" value="ECO:0000304"/>
    <property type="project" value="UniProtKB"/>
</dbReference>
<dbReference type="GO" id="GO:0005783">
    <property type="term" value="C:endoplasmic reticulum"/>
    <property type="evidence" value="ECO:0007669"/>
    <property type="project" value="Ensembl"/>
</dbReference>
<dbReference type="GO" id="GO:0005925">
    <property type="term" value="C:focal adhesion"/>
    <property type="evidence" value="ECO:0000304"/>
    <property type="project" value="UniProtKB"/>
</dbReference>
<dbReference type="GO" id="GO:0005794">
    <property type="term" value="C:Golgi apparatus"/>
    <property type="evidence" value="ECO:0000304"/>
    <property type="project" value="UniProtKB"/>
</dbReference>
<dbReference type="GO" id="GO:0005770">
    <property type="term" value="C:late endosome"/>
    <property type="evidence" value="ECO:0000304"/>
    <property type="project" value="UniProtKB"/>
</dbReference>
<dbReference type="GO" id="GO:0005874">
    <property type="term" value="C:microtubule"/>
    <property type="evidence" value="ECO:0007669"/>
    <property type="project" value="Ensembl"/>
</dbReference>
<dbReference type="GO" id="GO:0005739">
    <property type="term" value="C:mitochondrion"/>
    <property type="evidence" value="ECO:0000304"/>
    <property type="project" value="UniProtKB"/>
</dbReference>
<dbReference type="GO" id="GO:0005634">
    <property type="term" value="C:nucleus"/>
    <property type="evidence" value="ECO:0000304"/>
    <property type="project" value="UniProtKB"/>
</dbReference>
<dbReference type="GO" id="GO:0048471">
    <property type="term" value="C:perinuclear region of cytoplasm"/>
    <property type="evidence" value="ECO:0007669"/>
    <property type="project" value="Ensembl"/>
</dbReference>
<dbReference type="GO" id="GO:0005524">
    <property type="term" value="F:ATP binding"/>
    <property type="evidence" value="ECO:0007669"/>
    <property type="project" value="UniProtKB-KW"/>
</dbReference>
<dbReference type="GO" id="GO:0004708">
    <property type="term" value="F:MAP kinase kinase activity"/>
    <property type="evidence" value="ECO:0000314"/>
    <property type="project" value="MGI"/>
</dbReference>
<dbReference type="GO" id="GO:0005078">
    <property type="term" value="F:MAP-kinase scaffold activity"/>
    <property type="evidence" value="ECO:0007669"/>
    <property type="project" value="Ensembl"/>
</dbReference>
<dbReference type="GO" id="GO:0046872">
    <property type="term" value="F:metal ion binding"/>
    <property type="evidence" value="ECO:0007669"/>
    <property type="project" value="UniProtKB-KW"/>
</dbReference>
<dbReference type="GO" id="GO:0060090">
    <property type="term" value="F:molecular adaptor activity"/>
    <property type="evidence" value="ECO:0000314"/>
    <property type="project" value="BHF-UCL"/>
</dbReference>
<dbReference type="GO" id="GO:0030165">
    <property type="term" value="F:PDZ domain binding"/>
    <property type="evidence" value="ECO:0007669"/>
    <property type="project" value="Ensembl"/>
</dbReference>
<dbReference type="GO" id="GO:0106310">
    <property type="term" value="F:protein serine kinase activity"/>
    <property type="evidence" value="ECO:0007669"/>
    <property type="project" value="RHEA"/>
</dbReference>
<dbReference type="GO" id="GO:0043539">
    <property type="term" value="F:protein serine/threonine kinase activator activity"/>
    <property type="evidence" value="ECO:0007669"/>
    <property type="project" value="Ensembl"/>
</dbReference>
<dbReference type="GO" id="GO:0004674">
    <property type="term" value="F:protein serine/threonine kinase activity"/>
    <property type="evidence" value="ECO:0000266"/>
    <property type="project" value="MGI"/>
</dbReference>
<dbReference type="GO" id="GO:0004712">
    <property type="term" value="F:protein serine/threonine/tyrosine kinase activity"/>
    <property type="evidence" value="ECO:0000304"/>
    <property type="project" value="UniProtKB"/>
</dbReference>
<dbReference type="GO" id="GO:0004713">
    <property type="term" value="F:protein tyrosine kinase activity"/>
    <property type="evidence" value="ECO:0007669"/>
    <property type="project" value="UniProtKB-KW"/>
</dbReference>
<dbReference type="GO" id="GO:0097110">
    <property type="term" value="F:scaffold protein binding"/>
    <property type="evidence" value="ECO:0007669"/>
    <property type="project" value="Ensembl"/>
</dbReference>
<dbReference type="GO" id="GO:0060502">
    <property type="term" value="P:epithelial cell proliferation involved in lung morphogenesis"/>
    <property type="evidence" value="ECO:0000316"/>
    <property type="project" value="MGI"/>
</dbReference>
<dbReference type="GO" id="GO:0038133">
    <property type="term" value="P:ERBB2-ERBB3 signaling pathway"/>
    <property type="evidence" value="ECO:0000314"/>
    <property type="project" value="MGI"/>
</dbReference>
<dbReference type="GO" id="GO:0070371">
    <property type="term" value="P:ERK1 and ERK2 cascade"/>
    <property type="evidence" value="ECO:0000316"/>
    <property type="project" value="MGI"/>
</dbReference>
<dbReference type="GO" id="GO:0060324">
    <property type="term" value="P:face development"/>
    <property type="evidence" value="ECO:0000316"/>
    <property type="project" value="MGI"/>
</dbReference>
<dbReference type="GO" id="GO:0007507">
    <property type="term" value="P:heart development"/>
    <property type="evidence" value="ECO:0000316"/>
    <property type="project" value="MGI"/>
</dbReference>
<dbReference type="GO" id="GO:0048009">
    <property type="term" value="P:insulin-like growth factor receptor signaling pathway"/>
    <property type="evidence" value="ECO:0000315"/>
    <property type="project" value="MGI"/>
</dbReference>
<dbReference type="GO" id="GO:0060425">
    <property type="term" value="P:lung morphogenesis"/>
    <property type="evidence" value="ECO:0000316"/>
    <property type="project" value="MGI"/>
</dbReference>
<dbReference type="GO" id="GO:0000165">
    <property type="term" value="P:MAPK cascade"/>
    <property type="evidence" value="ECO:0000316"/>
    <property type="project" value="MGI"/>
</dbReference>
<dbReference type="GO" id="GO:0042552">
    <property type="term" value="P:myelination"/>
    <property type="evidence" value="ECO:0000315"/>
    <property type="project" value="MGI"/>
</dbReference>
<dbReference type="GO" id="GO:0050772">
    <property type="term" value="P:positive regulation of axonogenesis"/>
    <property type="evidence" value="ECO:0000316"/>
    <property type="project" value="MGI"/>
</dbReference>
<dbReference type="GO" id="GO:2000147">
    <property type="term" value="P:positive regulation of cell motility"/>
    <property type="evidence" value="ECO:0000314"/>
    <property type="project" value="BHF-UCL"/>
</dbReference>
<dbReference type="GO" id="GO:0045893">
    <property type="term" value="P:positive regulation of DNA-templated transcription"/>
    <property type="evidence" value="ECO:0007669"/>
    <property type="project" value="Ensembl"/>
</dbReference>
<dbReference type="GO" id="GO:0010628">
    <property type="term" value="P:positive regulation of gene expression"/>
    <property type="evidence" value="ECO:0007669"/>
    <property type="project" value="Ensembl"/>
</dbReference>
<dbReference type="GO" id="GO:0048679">
    <property type="term" value="P:regulation of axon regeneration"/>
    <property type="evidence" value="ECO:0000316"/>
    <property type="project" value="MGI"/>
</dbReference>
<dbReference type="GO" id="GO:2000641">
    <property type="term" value="P:regulation of early endosome to late endosome transport"/>
    <property type="evidence" value="ECO:0000304"/>
    <property type="project" value="UniProtKB"/>
</dbReference>
<dbReference type="GO" id="GO:0090170">
    <property type="term" value="P:regulation of Golgi inheritance"/>
    <property type="evidence" value="ECO:0000304"/>
    <property type="project" value="UniProtKB"/>
</dbReference>
<dbReference type="GO" id="GO:0032872">
    <property type="term" value="P:regulation of stress-activated MAPK cascade"/>
    <property type="evidence" value="ECO:0000304"/>
    <property type="project" value="UniProtKB"/>
</dbReference>
<dbReference type="GO" id="GO:0014044">
    <property type="term" value="P:Schwann cell development"/>
    <property type="evidence" value="ECO:0000315"/>
    <property type="project" value="MGI"/>
</dbReference>
<dbReference type="GO" id="GO:0048538">
    <property type="term" value="P:thymus development"/>
    <property type="evidence" value="ECO:0000316"/>
    <property type="project" value="MGI"/>
</dbReference>
<dbReference type="GO" id="GO:0030878">
    <property type="term" value="P:thyroid gland development"/>
    <property type="evidence" value="ECO:0000316"/>
    <property type="project" value="MGI"/>
</dbReference>
<dbReference type="GO" id="GO:0060440">
    <property type="term" value="P:trachea formation"/>
    <property type="evidence" value="ECO:0000316"/>
    <property type="project" value="MGI"/>
</dbReference>
<dbReference type="CDD" id="cd06615">
    <property type="entry name" value="PKc_MEK"/>
    <property type="match status" value="1"/>
</dbReference>
<dbReference type="FunFam" id="1.10.510.10:FF:000115">
    <property type="entry name" value="Dual specificity mitogen-activated protein kinase kinase 1"/>
    <property type="match status" value="1"/>
</dbReference>
<dbReference type="FunFam" id="3.30.200.20:FF:000100">
    <property type="entry name" value="Dual specificity mitogen-activated protein kinase kinase 1"/>
    <property type="match status" value="1"/>
</dbReference>
<dbReference type="Gene3D" id="3.30.200.20">
    <property type="entry name" value="Phosphorylase Kinase, domain 1"/>
    <property type="match status" value="1"/>
</dbReference>
<dbReference type="Gene3D" id="1.10.510.10">
    <property type="entry name" value="Transferase(Phosphotransferase) domain 1"/>
    <property type="match status" value="1"/>
</dbReference>
<dbReference type="InterPro" id="IPR011009">
    <property type="entry name" value="Kinase-like_dom_sf"/>
</dbReference>
<dbReference type="InterPro" id="IPR050915">
    <property type="entry name" value="MAP_kinase_kinase"/>
</dbReference>
<dbReference type="InterPro" id="IPR000719">
    <property type="entry name" value="Prot_kinase_dom"/>
</dbReference>
<dbReference type="InterPro" id="IPR017441">
    <property type="entry name" value="Protein_kinase_ATP_BS"/>
</dbReference>
<dbReference type="InterPro" id="IPR008271">
    <property type="entry name" value="Ser/Thr_kinase_AS"/>
</dbReference>
<dbReference type="PANTHER" id="PTHR47448">
    <property type="entry name" value="DUAL SPECIFICITY MITOGEN-ACTIVATED PROTEIN KINASE KINASE DSOR1-LIKE PROTEIN"/>
    <property type="match status" value="1"/>
</dbReference>
<dbReference type="PANTHER" id="PTHR47448:SF3">
    <property type="entry name" value="MITOGEN-ACTIVATED PROTEIN KINASE KINASE 2"/>
    <property type="match status" value="1"/>
</dbReference>
<dbReference type="Pfam" id="PF00069">
    <property type="entry name" value="Pkinase"/>
    <property type="match status" value="1"/>
</dbReference>
<dbReference type="SMART" id="SM00220">
    <property type="entry name" value="S_TKc"/>
    <property type="match status" value="1"/>
</dbReference>
<dbReference type="SUPFAM" id="SSF56112">
    <property type="entry name" value="Protein kinase-like (PK-like)"/>
    <property type="match status" value="1"/>
</dbReference>
<dbReference type="PROSITE" id="PS00107">
    <property type="entry name" value="PROTEIN_KINASE_ATP"/>
    <property type="match status" value="1"/>
</dbReference>
<dbReference type="PROSITE" id="PS50011">
    <property type="entry name" value="PROTEIN_KINASE_DOM"/>
    <property type="match status" value="1"/>
</dbReference>
<dbReference type="PROSITE" id="PS00108">
    <property type="entry name" value="PROTEIN_KINASE_ST"/>
    <property type="match status" value="1"/>
</dbReference>
<sequence>MLARRKPVLPALTINPTIAEGPSPTSEGASEANLVDLQKKLEELDLDEQQRKRLEAFLTQKAKVGELKDDDFERISELGAGNGGVVTKARHRPSGLIMARKLIHLEIKPAVRNQIIRELQVLHECNSPYIVGFYGAFYSDGEISICMEHMDGGSLDQVLKEAKRIPEDILGKVSIAVLRGLAYLREKHQIMHRDVKPSNILVNSRGEIKLCDFGVSGQLIDSMANSFVGTRSYMSPERLQGTHYSVQSDIWSMGLSLVELAIGRYPIPPPDAKELEASFGRPVVDGADGEPHSVSPRPRPPGRPISVGHGMDSRPAMAIFELLDYIVNEPPPKLPSGVFSSDFQEFVNKCLIKNPAERADLKLLMNHAFIKRSEGEEVDFAGWLCRTLRLKQPSTPTRTAV</sequence>
<accession>Q63932</accession>
<accession>Q9D7B0</accession>
<reference key="1">
    <citation type="journal article" date="1993" name="Cell Growth Differ.">
        <title>MEK2 is a kinase related to MEK1 and is differentially expressed in murine tissues.</title>
        <authorList>
            <person name="Brott B.K."/>
            <person name="Alessandrini A."/>
            <person name="Largaespada D.A."/>
            <person name="Copeland N.G."/>
            <person name="Jenkins N.A."/>
            <person name="Crews C.M."/>
            <person name="Erikson R.L."/>
        </authorList>
    </citation>
    <scope>NUCLEOTIDE SEQUENCE [MRNA]</scope>
    <scope>MUTAGENESIS</scope>
    <source>
        <strain>BALB/cJ</strain>
        <tissue>Neonatal brain</tissue>
    </source>
</reference>
<reference key="2">
    <citation type="journal article" date="2005" name="Science">
        <title>The transcriptional landscape of the mammalian genome.</title>
        <authorList>
            <person name="Carninci P."/>
            <person name="Kasukawa T."/>
            <person name="Katayama S."/>
            <person name="Gough J."/>
            <person name="Frith M.C."/>
            <person name="Maeda N."/>
            <person name="Oyama R."/>
            <person name="Ravasi T."/>
            <person name="Lenhard B."/>
            <person name="Wells C."/>
            <person name="Kodzius R."/>
            <person name="Shimokawa K."/>
            <person name="Bajic V.B."/>
            <person name="Brenner S.E."/>
            <person name="Batalov S."/>
            <person name="Forrest A.R."/>
            <person name="Zavolan M."/>
            <person name="Davis M.J."/>
            <person name="Wilming L.G."/>
            <person name="Aidinis V."/>
            <person name="Allen J.E."/>
            <person name="Ambesi-Impiombato A."/>
            <person name="Apweiler R."/>
            <person name="Aturaliya R.N."/>
            <person name="Bailey T.L."/>
            <person name="Bansal M."/>
            <person name="Baxter L."/>
            <person name="Beisel K.W."/>
            <person name="Bersano T."/>
            <person name="Bono H."/>
            <person name="Chalk A.M."/>
            <person name="Chiu K.P."/>
            <person name="Choudhary V."/>
            <person name="Christoffels A."/>
            <person name="Clutterbuck D.R."/>
            <person name="Crowe M.L."/>
            <person name="Dalla E."/>
            <person name="Dalrymple B.P."/>
            <person name="de Bono B."/>
            <person name="Della Gatta G."/>
            <person name="di Bernardo D."/>
            <person name="Down T."/>
            <person name="Engstrom P."/>
            <person name="Fagiolini M."/>
            <person name="Faulkner G."/>
            <person name="Fletcher C.F."/>
            <person name="Fukushima T."/>
            <person name="Furuno M."/>
            <person name="Futaki S."/>
            <person name="Gariboldi M."/>
            <person name="Georgii-Hemming P."/>
            <person name="Gingeras T.R."/>
            <person name="Gojobori T."/>
            <person name="Green R.E."/>
            <person name="Gustincich S."/>
            <person name="Harbers M."/>
            <person name="Hayashi Y."/>
            <person name="Hensch T.K."/>
            <person name="Hirokawa N."/>
            <person name="Hill D."/>
            <person name="Huminiecki L."/>
            <person name="Iacono M."/>
            <person name="Ikeo K."/>
            <person name="Iwama A."/>
            <person name="Ishikawa T."/>
            <person name="Jakt M."/>
            <person name="Kanapin A."/>
            <person name="Katoh M."/>
            <person name="Kawasawa Y."/>
            <person name="Kelso J."/>
            <person name="Kitamura H."/>
            <person name="Kitano H."/>
            <person name="Kollias G."/>
            <person name="Krishnan S.P."/>
            <person name="Kruger A."/>
            <person name="Kummerfeld S.K."/>
            <person name="Kurochkin I.V."/>
            <person name="Lareau L.F."/>
            <person name="Lazarevic D."/>
            <person name="Lipovich L."/>
            <person name="Liu J."/>
            <person name="Liuni S."/>
            <person name="McWilliam S."/>
            <person name="Madan Babu M."/>
            <person name="Madera M."/>
            <person name="Marchionni L."/>
            <person name="Matsuda H."/>
            <person name="Matsuzawa S."/>
            <person name="Miki H."/>
            <person name="Mignone F."/>
            <person name="Miyake S."/>
            <person name="Morris K."/>
            <person name="Mottagui-Tabar S."/>
            <person name="Mulder N."/>
            <person name="Nakano N."/>
            <person name="Nakauchi H."/>
            <person name="Ng P."/>
            <person name="Nilsson R."/>
            <person name="Nishiguchi S."/>
            <person name="Nishikawa S."/>
            <person name="Nori F."/>
            <person name="Ohara O."/>
            <person name="Okazaki Y."/>
            <person name="Orlando V."/>
            <person name="Pang K.C."/>
            <person name="Pavan W.J."/>
            <person name="Pavesi G."/>
            <person name="Pesole G."/>
            <person name="Petrovsky N."/>
            <person name="Piazza S."/>
            <person name="Reed J."/>
            <person name="Reid J.F."/>
            <person name="Ring B.Z."/>
            <person name="Ringwald M."/>
            <person name="Rost B."/>
            <person name="Ruan Y."/>
            <person name="Salzberg S.L."/>
            <person name="Sandelin A."/>
            <person name="Schneider C."/>
            <person name="Schoenbach C."/>
            <person name="Sekiguchi K."/>
            <person name="Semple C.A."/>
            <person name="Seno S."/>
            <person name="Sessa L."/>
            <person name="Sheng Y."/>
            <person name="Shibata Y."/>
            <person name="Shimada H."/>
            <person name="Shimada K."/>
            <person name="Silva D."/>
            <person name="Sinclair B."/>
            <person name="Sperling S."/>
            <person name="Stupka E."/>
            <person name="Sugiura K."/>
            <person name="Sultana R."/>
            <person name="Takenaka Y."/>
            <person name="Taki K."/>
            <person name="Tammoja K."/>
            <person name="Tan S.L."/>
            <person name="Tang S."/>
            <person name="Taylor M.S."/>
            <person name="Tegner J."/>
            <person name="Teichmann S.A."/>
            <person name="Ueda H.R."/>
            <person name="van Nimwegen E."/>
            <person name="Verardo R."/>
            <person name="Wei C.L."/>
            <person name="Yagi K."/>
            <person name="Yamanishi H."/>
            <person name="Zabarovsky E."/>
            <person name="Zhu S."/>
            <person name="Zimmer A."/>
            <person name="Hide W."/>
            <person name="Bult C."/>
            <person name="Grimmond S.M."/>
            <person name="Teasdale R.D."/>
            <person name="Liu E.T."/>
            <person name="Brusic V."/>
            <person name="Quackenbush J."/>
            <person name="Wahlestedt C."/>
            <person name="Mattick J.S."/>
            <person name="Hume D.A."/>
            <person name="Kai C."/>
            <person name="Sasaki D."/>
            <person name="Tomaru Y."/>
            <person name="Fukuda S."/>
            <person name="Kanamori-Katayama M."/>
            <person name="Suzuki M."/>
            <person name="Aoki J."/>
            <person name="Arakawa T."/>
            <person name="Iida J."/>
            <person name="Imamura K."/>
            <person name="Itoh M."/>
            <person name="Kato T."/>
            <person name="Kawaji H."/>
            <person name="Kawagashira N."/>
            <person name="Kawashima T."/>
            <person name="Kojima M."/>
            <person name="Kondo S."/>
            <person name="Konno H."/>
            <person name="Nakano K."/>
            <person name="Ninomiya N."/>
            <person name="Nishio T."/>
            <person name="Okada M."/>
            <person name="Plessy C."/>
            <person name="Shibata K."/>
            <person name="Shiraki T."/>
            <person name="Suzuki S."/>
            <person name="Tagami M."/>
            <person name="Waki K."/>
            <person name="Watahiki A."/>
            <person name="Okamura-Oho Y."/>
            <person name="Suzuki H."/>
            <person name="Kawai J."/>
            <person name="Hayashizaki Y."/>
        </authorList>
    </citation>
    <scope>NUCLEOTIDE SEQUENCE [LARGE SCALE MRNA]</scope>
    <source>
        <strain>C57BL/6J</strain>
        <tissue>Cerebellum</tissue>
        <tissue>Tongue</tissue>
    </source>
</reference>
<reference key="3">
    <citation type="submission" date="2005-07" db="EMBL/GenBank/DDBJ databases">
        <authorList>
            <person name="Mural R.J."/>
            <person name="Adams M.D."/>
            <person name="Myers E.W."/>
            <person name="Smith H.O."/>
            <person name="Venter J.C."/>
        </authorList>
    </citation>
    <scope>NUCLEOTIDE SEQUENCE [LARGE SCALE GENOMIC DNA]</scope>
</reference>
<reference key="4">
    <citation type="journal article" date="1992" name="Proc. Natl. Acad. Sci. U.S.A.">
        <title>Purification of a murine protein-tyrosine/threonine kinase that phosphorylates and activates the Erk-1 gene product: relationship to the fission yeast byr1 gene product.</title>
        <authorList>
            <person name="Crews C.M."/>
            <person name="Erikson R.L."/>
        </authorList>
    </citation>
    <scope>PROTEIN SEQUENCE OF 118-140 AND 210-238</scope>
    <source>
        <tissue>T-cell</tissue>
    </source>
</reference>
<reference key="5">
    <citation type="journal article" date="1999" name="Mol. Cell. Biol.">
        <title>Kinase suppressor of Ras forms a multiprotein signaling complex and modulates MEK localization.</title>
        <authorList>
            <person name="Stewart S."/>
            <person name="Sundaram M."/>
            <person name="Zhang Y."/>
            <person name="Lee J."/>
            <person name="Han M."/>
            <person name="Guan K.L."/>
        </authorList>
    </citation>
    <scope>CATALYTIC ACTIVITY</scope>
    <scope>COFACTOR</scope>
    <scope>INTERACTION WITH KSR1</scope>
    <scope>SUBCELLULAR LOCATION</scope>
    <scope>PHOSPHORYLATION AT SER-222</scope>
</reference>
<reference key="6">
    <citation type="journal article" date="2004" name="Proc. Natl. Acad. Sci. U.S.A.">
        <title>Modular construction of a signaling scaffold: MORG1 interacts with components of the ERK cascade and links ERK signaling to specific agonists.</title>
        <authorList>
            <person name="Vomastek T."/>
            <person name="Schaeffer H.-J."/>
            <person name="Tarcsafalvi A."/>
            <person name="Smolkin M.E."/>
            <person name="Bissonette E.A."/>
            <person name="Weber M.J."/>
        </authorList>
    </citation>
    <scope>INTERACTION WITH MORG1</scope>
</reference>
<reference key="7">
    <citation type="journal article" date="2009" name="Nat. Struct. Mol. Biol.">
        <title>A Mek1-Mek2 heterodimer determines the strength and duration of the Erk signal.</title>
        <authorList>
            <person name="Catalanotti F."/>
            <person name="Reyes G."/>
            <person name="Jesenberger V."/>
            <person name="Galabova-Kovacs G."/>
            <person name="de Matos Simoes R."/>
            <person name="Carugo O."/>
            <person name="Baccarini M."/>
        </authorList>
    </citation>
    <scope>INTERACTION WITH MAP2K1/MEK1</scope>
    <scope>PHOSPHORYLATION BY MAP2K1/MEK1</scope>
    <scope>FUNCTION IN ERK SIGNALING</scope>
</reference>
<reference key="8">
    <citation type="journal article" date="2010" name="Cell">
        <title>A tissue-specific atlas of mouse protein phosphorylation and expression.</title>
        <authorList>
            <person name="Huttlin E.L."/>
            <person name="Jedrychowski M.P."/>
            <person name="Elias J.E."/>
            <person name="Goswami T."/>
            <person name="Rad R."/>
            <person name="Beausoleil S.A."/>
            <person name="Villen J."/>
            <person name="Haas W."/>
            <person name="Sowa M.E."/>
            <person name="Gygi S.P."/>
        </authorList>
    </citation>
    <scope>IDENTIFICATION BY MASS SPECTROMETRY [LARGE SCALE ANALYSIS]</scope>
    <source>
        <tissue>Brain</tissue>
        <tissue>Brown adipose tissue</tissue>
        <tissue>Heart</tissue>
        <tissue>Kidney</tissue>
        <tissue>Liver</tissue>
        <tissue>Lung</tissue>
        <tissue>Pancreas</tissue>
        <tissue>Spleen</tissue>
        <tissue>Testis</tissue>
    </source>
</reference>